<sequence>MILLVSPKDVAEAHEAIEGGADIIDVKNPPEGSLGANFPWVIKETREATPEGMLVSAAIGDVPYKPGTVTLAALGAAISGADYIKVGLYGTRSYQEALDVMKNVTKAVKDSGENKIVVAAGYADAYRVGGVDPLIIPRVARDAGCDVAMLDTAVKDGKTLFDHMSIELLKEFVEETHKYGMKCALAGSIKIEEIPMLKEINCDIVGVRGAACTKGDRNEGRIQKDLVKEIVKVCRQ</sequence>
<protein>
    <recommendedName>
        <fullName evidence="1">(5-formylfuran-3-yl)methyl phosphate synthase</fullName>
        <ecNumber evidence="1">4.2.3.153</ecNumber>
    </recommendedName>
    <alternativeName>
        <fullName evidence="1">4-(hydroxymethyl)-2-furancarboxaldehyde-phosphate synthase</fullName>
        <shortName evidence="1">4-HFC-P synthase</shortName>
    </alternativeName>
</protein>
<gene>
    <name evidence="1" type="primary">mfnB</name>
    <name type="ordered locus">MmarC7_1735</name>
</gene>
<proteinExistence type="inferred from homology"/>
<reference key="1">
    <citation type="submission" date="2007-06" db="EMBL/GenBank/DDBJ databases">
        <title>Complete sequence of Methanococcus maripaludis C7.</title>
        <authorList>
            <consortium name="US DOE Joint Genome Institute"/>
            <person name="Copeland A."/>
            <person name="Lucas S."/>
            <person name="Lapidus A."/>
            <person name="Barry K."/>
            <person name="Glavina del Rio T."/>
            <person name="Dalin E."/>
            <person name="Tice H."/>
            <person name="Pitluck S."/>
            <person name="Clum A."/>
            <person name="Schmutz J."/>
            <person name="Larimer F."/>
            <person name="Land M."/>
            <person name="Hauser L."/>
            <person name="Kyrpides N."/>
            <person name="Anderson I."/>
            <person name="Sieprawska-Lupa M."/>
            <person name="Whitman W.B."/>
            <person name="Richardson P."/>
        </authorList>
    </citation>
    <scope>NUCLEOTIDE SEQUENCE [LARGE SCALE GENOMIC DNA]</scope>
    <source>
        <strain>C7 / ATCC BAA-1331</strain>
    </source>
</reference>
<feature type="chain" id="PRO_1000044921" description="(5-formylfuran-3-yl)methyl phosphate synthase">
    <location>
        <begin position="1"/>
        <end position="236"/>
    </location>
</feature>
<feature type="active site" description="Schiff-base intermediate with substrate" evidence="1">
    <location>
        <position position="27"/>
    </location>
</feature>
<feature type="active site" description="Proton acceptor" evidence="1">
    <location>
        <position position="85"/>
    </location>
</feature>
<keyword id="KW-0456">Lyase</keyword>
<keyword id="KW-0704">Schiff base</keyword>
<accession>A6VK15</accession>
<organism>
    <name type="scientific">Methanococcus maripaludis (strain C7 / ATCC BAA-1331)</name>
    <dbReference type="NCBI Taxonomy" id="426368"/>
    <lineage>
        <taxon>Archaea</taxon>
        <taxon>Methanobacteriati</taxon>
        <taxon>Methanobacteriota</taxon>
        <taxon>Methanomada group</taxon>
        <taxon>Methanococci</taxon>
        <taxon>Methanococcales</taxon>
        <taxon>Methanococcaceae</taxon>
        <taxon>Methanococcus</taxon>
    </lineage>
</organism>
<evidence type="ECO:0000255" key="1">
    <source>
        <dbReference type="HAMAP-Rule" id="MF_00681"/>
    </source>
</evidence>
<dbReference type="EC" id="4.2.3.153" evidence="1"/>
<dbReference type="EMBL" id="CP000745">
    <property type="protein sequence ID" value="ABR66791.1"/>
    <property type="molecule type" value="Genomic_DNA"/>
</dbReference>
<dbReference type="SMR" id="A6VK15"/>
<dbReference type="STRING" id="426368.MmarC7_1735"/>
<dbReference type="KEGG" id="mmz:MmarC7_1735"/>
<dbReference type="eggNOG" id="arCOG04482">
    <property type="taxonomic scope" value="Archaea"/>
</dbReference>
<dbReference type="HOGENOM" id="CLU_068659_0_0_2"/>
<dbReference type="OrthoDB" id="81473at2157"/>
<dbReference type="UniPathway" id="UPA00080"/>
<dbReference type="GO" id="GO:0016830">
    <property type="term" value="F:carbon-carbon lyase activity"/>
    <property type="evidence" value="ECO:0007669"/>
    <property type="project" value="UniProtKB-UniRule"/>
</dbReference>
<dbReference type="GO" id="GO:2001120">
    <property type="term" value="P:methanofuran biosynthetic process"/>
    <property type="evidence" value="ECO:0007669"/>
    <property type="project" value="UniProtKB-UniRule"/>
</dbReference>
<dbReference type="CDD" id="cd00945">
    <property type="entry name" value="Aldolase_Class_I"/>
    <property type="match status" value="1"/>
</dbReference>
<dbReference type="HAMAP" id="MF_00681">
    <property type="entry name" value="MfnB"/>
    <property type="match status" value="1"/>
</dbReference>
<dbReference type="InterPro" id="IPR007565">
    <property type="entry name" value="4HFCP_synth"/>
</dbReference>
<dbReference type="InterPro" id="IPR035081">
    <property type="entry name" value="4HFCP_synth_arc"/>
</dbReference>
<dbReference type="NCBIfam" id="NF002573">
    <property type="entry name" value="PRK02227.1-1"/>
    <property type="match status" value="1"/>
</dbReference>
<dbReference type="NCBIfam" id="NF002575">
    <property type="entry name" value="PRK02227.1-3"/>
    <property type="match status" value="1"/>
</dbReference>
<dbReference type="Pfam" id="PF04476">
    <property type="entry name" value="4HFCP_synth"/>
    <property type="match status" value="1"/>
</dbReference>
<dbReference type="PIRSF" id="PIRSF015957">
    <property type="entry name" value="UCP015957"/>
    <property type="match status" value="1"/>
</dbReference>
<dbReference type="SUPFAM" id="SSF51569">
    <property type="entry name" value="Aldolase"/>
    <property type="match status" value="1"/>
</dbReference>
<dbReference type="SUPFAM" id="SSF51395">
    <property type="entry name" value="FMN-linked oxidoreductases"/>
    <property type="match status" value="1"/>
</dbReference>
<comment type="function">
    <text evidence="1">Catalyzes the formation of 4-(hydroxymethyl)-2-furancarboxaldehyde phosphate (4-HFC-P) from two molecules of glyceraldehyde-3-P (GA-3-P).</text>
</comment>
<comment type="catalytic activity">
    <reaction evidence="1">
        <text>2 D-glyceraldehyde 3-phosphate = 4-(hydroxymethyl)-2-furancarboxaldehyde phosphate + phosphate + 2 H2O</text>
        <dbReference type="Rhea" id="RHEA:43536"/>
        <dbReference type="ChEBI" id="CHEBI:15377"/>
        <dbReference type="ChEBI" id="CHEBI:43474"/>
        <dbReference type="ChEBI" id="CHEBI:59776"/>
        <dbReference type="ChEBI" id="CHEBI:83407"/>
        <dbReference type="EC" id="4.2.3.153"/>
    </reaction>
</comment>
<comment type="pathway">
    <text evidence="1">Cofactor biosynthesis; methanofuran biosynthesis.</text>
</comment>
<comment type="similarity">
    <text evidence="1">Belongs to the MfnB family.</text>
</comment>
<name>MFNB_METM7</name>